<evidence type="ECO:0000250" key="1"/>
<evidence type="ECO:0000255" key="2">
    <source>
        <dbReference type="PROSITE-ProRule" id="PRU00026"/>
    </source>
</evidence>
<evidence type="ECO:0000255" key="3">
    <source>
        <dbReference type="PROSITE-ProRule" id="PRU01119"/>
    </source>
</evidence>
<evidence type="ECO:0000256" key="4">
    <source>
        <dbReference type="SAM" id="MobiDB-lite"/>
    </source>
</evidence>
<evidence type="ECO:0000269" key="5">
    <source>
    </source>
</evidence>
<protein>
    <recommendedName>
        <fullName>Beige protein homolog 1</fullName>
    </recommendedName>
</protein>
<dbReference type="EMBL" id="CU329671">
    <property type="protein sequence ID" value="CAA20653.2"/>
    <property type="molecule type" value="Genomic_DNA"/>
</dbReference>
<dbReference type="RefSeq" id="NP_595759.2">
    <property type="nucleotide sequence ID" value="NM_001021659.3"/>
</dbReference>
<dbReference type="SMR" id="Q7LKZ7"/>
<dbReference type="BioGRID" id="277098">
    <property type="interactions" value="1"/>
</dbReference>
<dbReference type="FunCoup" id="Q7LKZ7">
    <property type="interactions" value="80"/>
</dbReference>
<dbReference type="STRING" id="284812.Q7LKZ7"/>
<dbReference type="iPTMnet" id="Q7LKZ7"/>
<dbReference type="PaxDb" id="4896-SPBC28E12.06c.1"/>
<dbReference type="EnsemblFungi" id="SPBC28E12.06c.1">
    <property type="protein sequence ID" value="SPBC28E12.06c.1:pep"/>
    <property type="gene ID" value="SPBC28E12.06c"/>
</dbReference>
<dbReference type="GeneID" id="2540571"/>
<dbReference type="KEGG" id="spo:2540571"/>
<dbReference type="PomBase" id="SPBC28E12.06c">
    <property type="gene designation" value="lvs1"/>
</dbReference>
<dbReference type="VEuPathDB" id="FungiDB:SPBC28E12.06c"/>
<dbReference type="eggNOG" id="KOG1786">
    <property type="taxonomic scope" value="Eukaryota"/>
</dbReference>
<dbReference type="HOGENOM" id="CLU_000175_2_0_1"/>
<dbReference type="InParanoid" id="Q7LKZ7"/>
<dbReference type="OMA" id="EMSNFHY"/>
<dbReference type="PhylomeDB" id="Q7LKZ7"/>
<dbReference type="PRO" id="PR:Q7LKZ7"/>
<dbReference type="Proteomes" id="UP000002485">
    <property type="component" value="Chromosome II"/>
</dbReference>
<dbReference type="GO" id="GO:0005829">
    <property type="term" value="C:cytosol"/>
    <property type="evidence" value="ECO:0007005"/>
    <property type="project" value="PomBase"/>
</dbReference>
<dbReference type="GO" id="GO:0000324">
    <property type="term" value="C:fungal-type vacuole"/>
    <property type="evidence" value="ECO:0000266"/>
    <property type="project" value="PomBase"/>
</dbReference>
<dbReference type="GO" id="GO:0016020">
    <property type="term" value="C:membrane"/>
    <property type="evidence" value="ECO:0007669"/>
    <property type="project" value="UniProtKB-SubCell"/>
</dbReference>
<dbReference type="GO" id="GO:0035091">
    <property type="term" value="F:phosphatidylinositol binding"/>
    <property type="evidence" value="ECO:0000255"/>
    <property type="project" value="PomBase"/>
</dbReference>
<dbReference type="GO" id="GO:0008270">
    <property type="term" value="F:zinc ion binding"/>
    <property type="evidence" value="ECO:0007669"/>
    <property type="project" value="UniProtKB-KW"/>
</dbReference>
<dbReference type="GO" id="GO:0006914">
    <property type="term" value="P:autophagy"/>
    <property type="evidence" value="ECO:0000266"/>
    <property type="project" value="PomBase"/>
</dbReference>
<dbReference type="GO" id="GO:0045324">
    <property type="term" value="P:late endosome to vacuole transport"/>
    <property type="evidence" value="ECO:0000303"/>
    <property type="project" value="PomBase"/>
</dbReference>
<dbReference type="GO" id="GO:0007033">
    <property type="term" value="P:vacuole organization"/>
    <property type="evidence" value="ECO:0000316"/>
    <property type="project" value="PomBase"/>
</dbReference>
<dbReference type="CDD" id="cd06071">
    <property type="entry name" value="Beach"/>
    <property type="match status" value="1"/>
</dbReference>
<dbReference type="CDD" id="cd00065">
    <property type="entry name" value="FYVE_like_SF"/>
    <property type="match status" value="1"/>
</dbReference>
<dbReference type="CDD" id="cd01201">
    <property type="entry name" value="PH_BEACH"/>
    <property type="match status" value="1"/>
</dbReference>
<dbReference type="FunFam" id="2.130.10.10:FF:003137">
    <property type="entry name" value="BEACH domain-containing protein lvsD"/>
    <property type="match status" value="1"/>
</dbReference>
<dbReference type="FunFam" id="1.10.1540.10:FF:000001">
    <property type="entry name" value="neurobeachin isoform X1"/>
    <property type="match status" value="1"/>
</dbReference>
<dbReference type="Gene3D" id="1.10.1540.10">
    <property type="entry name" value="BEACH domain"/>
    <property type="match status" value="1"/>
</dbReference>
<dbReference type="Gene3D" id="2.30.29.30">
    <property type="entry name" value="Pleckstrin-homology domain (PH domain)/Phosphotyrosine-binding domain (PTB)"/>
    <property type="match status" value="1"/>
</dbReference>
<dbReference type="Gene3D" id="2.130.10.10">
    <property type="entry name" value="YVTN repeat-like/Quinoprotein amine dehydrogenase"/>
    <property type="match status" value="1"/>
</dbReference>
<dbReference type="Gene3D" id="3.30.40.10">
    <property type="entry name" value="Zinc/RING finger domain, C3HC4 (zinc finger)"/>
    <property type="match status" value="1"/>
</dbReference>
<dbReference type="InterPro" id="IPR000409">
    <property type="entry name" value="BEACH_dom"/>
</dbReference>
<dbReference type="InterPro" id="IPR036372">
    <property type="entry name" value="BEACH_dom_sf"/>
</dbReference>
<dbReference type="InterPro" id="IPR051944">
    <property type="entry name" value="BEACH_domain_protein"/>
</dbReference>
<dbReference type="InterPro" id="IPR013320">
    <property type="entry name" value="ConA-like_dom_sf"/>
</dbReference>
<dbReference type="InterPro" id="IPR023362">
    <property type="entry name" value="PH-BEACH_dom"/>
</dbReference>
<dbReference type="InterPro" id="IPR011993">
    <property type="entry name" value="PH-like_dom_sf"/>
</dbReference>
<dbReference type="InterPro" id="IPR015943">
    <property type="entry name" value="WD40/YVTN_repeat-like_dom_sf"/>
</dbReference>
<dbReference type="InterPro" id="IPR036322">
    <property type="entry name" value="WD40_repeat_dom_sf"/>
</dbReference>
<dbReference type="InterPro" id="IPR001680">
    <property type="entry name" value="WD40_rpt"/>
</dbReference>
<dbReference type="InterPro" id="IPR000306">
    <property type="entry name" value="Znf_FYVE"/>
</dbReference>
<dbReference type="InterPro" id="IPR011011">
    <property type="entry name" value="Znf_FYVE_PHD"/>
</dbReference>
<dbReference type="InterPro" id="IPR013083">
    <property type="entry name" value="Znf_RING/FYVE/PHD"/>
</dbReference>
<dbReference type="PANTHER" id="PTHR46108">
    <property type="entry name" value="BLUE CHEESE"/>
    <property type="match status" value="1"/>
</dbReference>
<dbReference type="PANTHER" id="PTHR46108:SF4">
    <property type="entry name" value="BLUE CHEESE"/>
    <property type="match status" value="1"/>
</dbReference>
<dbReference type="Pfam" id="PF02138">
    <property type="entry name" value="Beach"/>
    <property type="match status" value="1"/>
</dbReference>
<dbReference type="Pfam" id="PF14844">
    <property type="entry name" value="PH_BEACH"/>
    <property type="match status" value="1"/>
</dbReference>
<dbReference type="Pfam" id="PF00400">
    <property type="entry name" value="WD40"/>
    <property type="match status" value="1"/>
</dbReference>
<dbReference type="SMART" id="SM01026">
    <property type="entry name" value="Beach"/>
    <property type="match status" value="1"/>
</dbReference>
<dbReference type="SMART" id="SM00064">
    <property type="entry name" value="FYVE"/>
    <property type="match status" value="1"/>
</dbReference>
<dbReference type="SMART" id="SM00320">
    <property type="entry name" value="WD40"/>
    <property type="match status" value="3"/>
</dbReference>
<dbReference type="SUPFAM" id="SSF81837">
    <property type="entry name" value="BEACH domain"/>
    <property type="match status" value="1"/>
</dbReference>
<dbReference type="SUPFAM" id="SSF49899">
    <property type="entry name" value="Concanavalin A-like lectins/glucanases"/>
    <property type="match status" value="1"/>
</dbReference>
<dbReference type="SUPFAM" id="SSF57903">
    <property type="entry name" value="FYVE/PHD zinc finger"/>
    <property type="match status" value="1"/>
</dbReference>
<dbReference type="SUPFAM" id="SSF50729">
    <property type="entry name" value="PH domain-like"/>
    <property type="match status" value="1"/>
</dbReference>
<dbReference type="SUPFAM" id="SSF50978">
    <property type="entry name" value="WD40 repeat-like"/>
    <property type="match status" value="1"/>
</dbReference>
<dbReference type="PROSITE" id="PS50197">
    <property type="entry name" value="BEACH"/>
    <property type="match status" value="1"/>
</dbReference>
<dbReference type="PROSITE" id="PS51783">
    <property type="entry name" value="PH_BEACH"/>
    <property type="match status" value="1"/>
</dbReference>
<dbReference type="PROSITE" id="PS50082">
    <property type="entry name" value="WD_REPEATS_2"/>
    <property type="match status" value="1"/>
</dbReference>
<dbReference type="PROSITE" id="PS50294">
    <property type="entry name" value="WD_REPEATS_REGION"/>
    <property type="match status" value="1"/>
</dbReference>
<proteinExistence type="evidence at protein level"/>
<sequence length="2609" mass="295658">MDRKANAYSKSVELLSRLEGCPSEKVLLEELRKLRGFIRNDIPSNFFPQLFITDNGFAAIKKAVTKLNFQSLLSLDIFECCLQILGIATSYTILRSWLLSRKHIEAWIELAIRRMFYSFCAIQDDSNISIYAIGTSSKTDSSIQAASPNEDLKSEGAQEIDSQSETVSISSDVDYDEDRKDLKKAKICSAYYLKTRLLLAVLSFAQNDSTFSLLKLVPSLQDNTNASLVELSRVVEAAIQKLSIKPLAFPNVLPQVLLLCPSISIFNLILLHLRALIRSSPENAIKIGYSKTMHFLLTYLFEPPTSFPLSDVSKDLLNEITLHCATFGVSNASTAKVLRTYLKTKSEFLRTWLLKALSHLVAPSFYFNPSTKGYSSIDFTLSSPVMPINGYSVSLWLNIESLMNDDGNYAPTTLFLISDFLKSTLFRLLLDASKKTVVVHIGSSKDTCVVNFSTPITNFFSKIYKDNPSLNPPSWHLITLVHRNEKSSLPNLELYIDGSAVERAACPYPFLSSTLQPLYVSLGPSIGSRNQSTPSTLAPNVAETDALVSENTGAASQKTSKSYKTNDSLKVPPLVPLLIGTTRFFPVPLVSSQIAIISSLGPSYSGCFQGPINDYMTYKASTALTLEIQDSKSNTEDLLHSIQAFSRSPIAFMSCARDYVDIMDLQLSDFCSFSVLETLKKLENQYYSHVYINRAVSSYDKAFSAEQPSFGVSSGSVTPIIMQSISDAIYNIGGSSILLELVGTAETEAELNFGLQVFFSSIEDNWRFSENVEQTHSFEILAQILHSKSHLLVSEETLKIIALMSGVHHTRFKHPLVMNPLLFRYLILDFDLWSKAPNSNLFVQQLGYIVSLIENNDYAGFNVKRLMKMQILKKLLTAMRNCLFHKDLLPILRLLFKVLMTSAFVSENIRSVATYIIYASQATGKSKPIRRSSVSIAVDRSDSNYISIKESGYAICEEFIDLLIKSNGEPSFLRRFSSMITPAWLLFLLRQQDIHYFICGIRLLNQSICSLGSSFLSKFSQKFHGFLILHDNLKDHIHLEELWLNLLFLSLGLGIRSVQFRTDLTYKQKLDFVLKNELDNILPLSEVFPSLFHAIQATLEKVSNVNGKLNSENVAALRYADDTMSFLVTLQTTYSFELTLNYDFSELLTKVVFPFLSPVDTITAEQEMRDLLHNIRQPLPRSSSSKTFGEGIKKSVRKFSMSGSFKRVVTPLGTQLRKDILNDSITDMENTSSFTASFPQSDQALQYFDNFTVQYAEAKDVIKGLLFSILTCIYNRITSGQGFSYSRLLVYLPPSQIEKKSTFFSGILRSTMSKLIEAVKNDKLLLAEPSILANISYIFTKFIRMHLLGYLKGSWLEIVDDLGSLLEEIISRPDFLAKLPKNGRNAAMNMYSCFLDLFLLEVSDLKQTECNAQSDKIIKSITYWQSLLFNSKTYQKDLFSLLWYAVYIMVETTTGVVRLQAVDAWRLLFLHSPGYLSDIAKTCNNDPRFAYEICKTLDNDSDKFVRWLDDNAAEVNQFMLSCFFCRWEDFLKQQHKLADEEASLLQFSRLEHLRKQLAQNTFNENILNESSASYHVWISSLFALECNRFKKMSQDQSDQENFVAAALLSQKNELSHENSILGSKTTSWELDSTEGSERMRKRLMPCLLQSSELDSKLEARSSGARRNRSFDTSVEAPVSLTNEEKQAATLILPSQEETLHDAARSDSNNSMEDEEDDVDEEDKEDKNRTVMRSIESGDSIQDVYNVSRIFGLEATEGILLLGKQYLYLMDNFFLRSDNEIVDVNDNSIIDERDPYLQLLHLQSLSSSGKVRRHISKENNWHWDFIDLSLVLKRFYLLRDVGLELFFKDGRSFLTILSNTKNRDSLYQKLVARAPGADVLSTSHFATSMSRDLGKANGKSNFLSSKLANALSFSTTHPATKRWERREISNFNYLQIVNTLAGRTYNDLTQYPVFPWVIADYTSKELDLNNPKTYRNFCKPMGAQHPERESQFNERYDLLLGLNDSQQQPFHYGTHYSSAMIVCSYLIRLRPFVDSYLALQGGQFDHADRLFYSIEQAWRSSSKENMADVRELIPEFFYLSEMFINGNGFDFGSRQKESTPINDVILPPWAKGDPAIFVQKNREALESKYVSAHLHEWIDLVFGCKQRGDEAVAATNVFHHLSYQGAIDLENIENEFELAAAVGIIHNFGQTPKQVFKKPHPQRGPDFTDTPLGPYLFGRFEDSIHLLFQSCSPIIRICKKVAHIQYDPSKDEVGAFAADYTPLGPNTFLAWGRVDNTVQLISDQLDKQPVMFEELHSEKITHVVACDERTFLTASLDLTLRLWTLSTNKPIKASLKRVLYGHRYRITCVTVCKAFSIIVSGDAGGNLIIWDLNRAEFVSSLSVYKLPIQTIAVNARNAEIAFSTGFYCCVVNVNGKILVKDKLSRIYNENSDENILCSCFYTGANSEWLHKNLFITGHPDGIIRIWEKRLQSNAKLEAEKNNADRPKWRFHLLRQLQHTKGLGRNRVATRQNIITITPNGQARGIFAGDDKGQVFSWMLPDTTSNVHLEKDNTSELCSLCDSRFSLMEWRSQCRACGNSNVCSDCVSMLKDTNIKTCYECYRQMPLCYKN</sequence>
<feature type="chain" id="PRO_0000372305" description="Beige protein homolog 1">
    <location>
        <begin position="1"/>
        <end position="2609"/>
    </location>
</feature>
<feature type="domain" description="BEACH-type PH" evidence="3">
    <location>
        <begin position="1735"/>
        <end position="1870"/>
    </location>
</feature>
<feature type="domain" description="BEACH" evidence="2">
    <location>
        <begin position="1907"/>
        <end position="2202"/>
    </location>
</feature>
<feature type="repeat" description="WD 1">
    <location>
        <begin position="2249"/>
        <end position="2290"/>
    </location>
</feature>
<feature type="repeat" description="WD 2">
    <location>
        <begin position="2294"/>
        <end position="2332"/>
    </location>
</feature>
<feature type="repeat" description="WD 3">
    <location>
        <begin position="2340"/>
        <end position="2379"/>
    </location>
</feature>
<feature type="repeat" description="WD 4">
    <location>
        <begin position="2429"/>
        <end position="2475"/>
    </location>
</feature>
<feature type="repeat" description="WD 5">
    <location>
        <begin position="2507"/>
        <end position="2546"/>
    </location>
</feature>
<feature type="zinc finger region" description="FYVE-type">
    <location>
        <begin position="2550"/>
        <end position="2604"/>
    </location>
</feature>
<feature type="region of interest" description="Disordered" evidence="4">
    <location>
        <begin position="1654"/>
        <end position="1679"/>
    </location>
</feature>
<feature type="region of interest" description="Disordered" evidence="4">
    <location>
        <begin position="1691"/>
        <end position="1729"/>
    </location>
</feature>
<feature type="compositionally biased region" description="Acidic residues" evidence="4">
    <location>
        <begin position="1711"/>
        <end position="1723"/>
    </location>
</feature>
<accession>Q7LKZ7</accession>
<name>BPH1_SCHPO</name>
<reference key="1">
    <citation type="journal article" date="2002" name="Nature">
        <title>The genome sequence of Schizosaccharomyces pombe.</title>
        <authorList>
            <person name="Wood V."/>
            <person name="Gwilliam R."/>
            <person name="Rajandream M.A."/>
            <person name="Lyne M.H."/>
            <person name="Lyne R."/>
            <person name="Stewart A."/>
            <person name="Sgouros J.G."/>
            <person name="Peat N."/>
            <person name="Hayles J."/>
            <person name="Baker S.G."/>
            <person name="Basham D."/>
            <person name="Bowman S."/>
            <person name="Brooks K."/>
            <person name="Brown D."/>
            <person name="Brown S."/>
            <person name="Chillingworth T."/>
            <person name="Churcher C.M."/>
            <person name="Collins M."/>
            <person name="Connor R."/>
            <person name="Cronin A."/>
            <person name="Davis P."/>
            <person name="Feltwell T."/>
            <person name="Fraser A."/>
            <person name="Gentles S."/>
            <person name="Goble A."/>
            <person name="Hamlin N."/>
            <person name="Harris D.E."/>
            <person name="Hidalgo J."/>
            <person name="Hodgson G."/>
            <person name="Holroyd S."/>
            <person name="Hornsby T."/>
            <person name="Howarth S."/>
            <person name="Huckle E.J."/>
            <person name="Hunt S."/>
            <person name="Jagels K."/>
            <person name="James K.D."/>
            <person name="Jones L."/>
            <person name="Jones M."/>
            <person name="Leather S."/>
            <person name="McDonald S."/>
            <person name="McLean J."/>
            <person name="Mooney P."/>
            <person name="Moule S."/>
            <person name="Mungall K.L."/>
            <person name="Murphy L.D."/>
            <person name="Niblett D."/>
            <person name="Odell C."/>
            <person name="Oliver K."/>
            <person name="O'Neil S."/>
            <person name="Pearson D."/>
            <person name="Quail M.A."/>
            <person name="Rabbinowitsch E."/>
            <person name="Rutherford K.M."/>
            <person name="Rutter S."/>
            <person name="Saunders D."/>
            <person name="Seeger K."/>
            <person name="Sharp S."/>
            <person name="Skelton J."/>
            <person name="Simmonds M.N."/>
            <person name="Squares R."/>
            <person name="Squares S."/>
            <person name="Stevens K."/>
            <person name="Taylor K."/>
            <person name="Taylor R.G."/>
            <person name="Tivey A."/>
            <person name="Walsh S.V."/>
            <person name="Warren T."/>
            <person name="Whitehead S."/>
            <person name="Woodward J.R."/>
            <person name="Volckaert G."/>
            <person name="Aert R."/>
            <person name="Robben J."/>
            <person name="Grymonprez B."/>
            <person name="Weltjens I."/>
            <person name="Vanstreels E."/>
            <person name="Rieger M."/>
            <person name="Schaefer M."/>
            <person name="Mueller-Auer S."/>
            <person name="Gabel C."/>
            <person name="Fuchs M."/>
            <person name="Duesterhoeft A."/>
            <person name="Fritzc C."/>
            <person name="Holzer E."/>
            <person name="Moestl D."/>
            <person name="Hilbert H."/>
            <person name="Borzym K."/>
            <person name="Langer I."/>
            <person name="Beck A."/>
            <person name="Lehrach H."/>
            <person name="Reinhardt R."/>
            <person name="Pohl T.M."/>
            <person name="Eger P."/>
            <person name="Zimmermann W."/>
            <person name="Wedler H."/>
            <person name="Wambutt R."/>
            <person name="Purnelle B."/>
            <person name="Goffeau A."/>
            <person name="Cadieu E."/>
            <person name="Dreano S."/>
            <person name="Gloux S."/>
            <person name="Lelaure V."/>
            <person name="Mottier S."/>
            <person name="Galibert F."/>
            <person name="Aves S.J."/>
            <person name="Xiang Z."/>
            <person name="Hunt C."/>
            <person name="Moore K."/>
            <person name="Hurst S.M."/>
            <person name="Lucas M."/>
            <person name="Rochet M."/>
            <person name="Gaillardin C."/>
            <person name="Tallada V.A."/>
            <person name="Garzon A."/>
            <person name="Thode G."/>
            <person name="Daga R.R."/>
            <person name="Cruzado L."/>
            <person name="Jimenez J."/>
            <person name="Sanchez M."/>
            <person name="del Rey F."/>
            <person name="Benito J."/>
            <person name="Dominguez A."/>
            <person name="Revuelta J.L."/>
            <person name="Moreno S."/>
            <person name="Armstrong J."/>
            <person name="Forsburg S.L."/>
            <person name="Cerutti L."/>
            <person name="Lowe T."/>
            <person name="McCombie W.R."/>
            <person name="Paulsen I."/>
            <person name="Potashkin J."/>
            <person name="Shpakovski G.V."/>
            <person name="Ussery D."/>
            <person name="Barrell B.G."/>
            <person name="Nurse P."/>
        </authorList>
    </citation>
    <scope>NUCLEOTIDE SEQUENCE [LARGE SCALE GENOMIC DNA]</scope>
    <source>
        <strain>972 / ATCC 24843</strain>
    </source>
</reference>
<reference key="2">
    <citation type="journal article" date="2006" name="Nat. Biotechnol.">
        <title>ORFeome cloning and global analysis of protein localization in the fission yeast Schizosaccharomyces pombe.</title>
        <authorList>
            <person name="Matsuyama A."/>
            <person name="Arai R."/>
            <person name="Yashiroda Y."/>
            <person name="Shirai A."/>
            <person name="Kamata A."/>
            <person name="Sekido S."/>
            <person name="Kobayashi Y."/>
            <person name="Hashimoto A."/>
            <person name="Hamamoto M."/>
            <person name="Hiraoka Y."/>
            <person name="Horinouchi S."/>
            <person name="Yoshida M."/>
        </authorList>
    </citation>
    <scope>SUBCELLULAR LOCATION [LARGE SCALE ANALYSIS]</scope>
</reference>
<reference key="3">
    <citation type="journal article" date="2008" name="J. Proteome Res.">
        <title>Phosphoproteome analysis of fission yeast.</title>
        <authorList>
            <person name="Wilson-Grady J.T."/>
            <person name="Villen J."/>
            <person name="Gygi S.P."/>
        </authorList>
    </citation>
    <scope>PHOSPHORYLATION [LARGE SCALE ANALYSIS]</scope>
    <scope>IDENTIFICATION BY MASS SPECTROMETRY</scope>
</reference>
<keyword id="KW-0963">Cytoplasm</keyword>
<keyword id="KW-0472">Membrane</keyword>
<keyword id="KW-0479">Metal-binding</keyword>
<keyword id="KW-1185">Reference proteome</keyword>
<keyword id="KW-0677">Repeat</keyword>
<keyword id="KW-0853">WD repeat</keyword>
<keyword id="KW-0862">Zinc</keyword>
<keyword id="KW-0863">Zinc-finger</keyword>
<comment type="function">
    <text evidence="1">May be involved in protein sorting and cell wall formation.</text>
</comment>
<comment type="subcellular location">
    <subcellularLocation>
        <location evidence="5">Cytoplasm</location>
    </subcellularLocation>
    <subcellularLocation>
        <location evidence="1">Membrane</location>
        <topology evidence="1">Peripheral membrane protein</topology>
        <orientation evidence="1">Cytoplasmic side</orientation>
    </subcellularLocation>
</comment>
<organism>
    <name type="scientific">Schizosaccharomyces pombe (strain 972 / ATCC 24843)</name>
    <name type="common">Fission yeast</name>
    <dbReference type="NCBI Taxonomy" id="284812"/>
    <lineage>
        <taxon>Eukaryota</taxon>
        <taxon>Fungi</taxon>
        <taxon>Dikarya</taxon>
        <taxon>Ascomycota</taxon>
        <taxon>Taphrinomycotina</taxon>
        <taxon>Schizosaccharomycetes</taxon>
        <taxon>Schizosaccharomycetales</taxon>
        <taxon>Schizosaccharomycetaceae</taxon>
        <taxon>Schizosaccharomyces</taxon>
    </lineage>
</organism>
<gene>
    <name type="primary">lvs1</name>
    <name type="ORF">SPBC28E12.06c</name>
</gene>